<dbReference type="EC" id="1.17.4.1"/>
<dbReference type="EMBL" id="AL583923">
    <property type="protein sequence ID" value="CAC30684.1"/>
    <property type="molecule type" value="Genomic_DNA"/>
</dbReference>
<dbReference type="PIR" id="E87125">
    <property type="entry name" value="E87125"/>
</dbReference>
<dbReference type="RefSeq" id="NP_302193.1">
    <property type="nucleotide sequence ID" value="NC_002677.1"/>
</dbReference>
<dbReference type="SMR" id="Q9CBQ2"/>
<dbReference type="STRING" id="272631.gene:17575576"/>
<dbReference type="DrugBank" id="DB04272">
    <property type="generic name" value="Citric acid"/>
</dbReference>
<dbReference type="KEGG" id="mle:ML1731"/>
<dbReference type="PATRIC" id="fig|272631.5.peg.3256"/>
<dbReference type="Leproma" id="ML1731"/>
<dbReference type="eggNOG" id="COG0208">
    <property type="taxonomic scope" value="Bacteria"/>
</dbReference>
<dbReference type="HOGENOM" id="CLU_052495_0_0_11"/>
<dbReference type="OrthoDB" id="9766544at2"/>
<dbReference type="Proteomes" id="UP000000806">
    <property type="component" value="Chromosome"/>
</dbReference>
<dbReference type="GO" id="GO:0005971">
    <property type="term" value="C:ribonucleoside-diphosphate reductase complex"/>
    <property type="evidence" value="ECO:0007669"/>
    <property type="project" value="InterPro"/>
</dbReference>
<dbReference type="GO" id="GO:0046872">
    <property type="term" value="F:metal ion binding"/>
    <property type="evidence" value="ECO:0007669"/>
    <property type="project" value="UniProtKB-KW"/>
</dbReference>
<dbReference type="GO" id="GO:0004748">
    <property type="term" value="F:ribonucleoside-diphosphate reductase activity, thioredoxin disulfide as acceptor"/>
    <property type="evidence" value="ECO:0007669"/>
    <property type="project" value="UniProtKB-EC"/>
</dbReference>
<dbReference type="GO" id="GO:0009263">
    <property type="term" value="P:deoxyribonucleotide biosynthetic process"/>
    <property type="evidence" value="ECO:0007669"/>
    <property type="project" value="UniProtKB-KW"/>
</dbReference>
<dbReference type="CDD" id="cd01049">
    <property type="entry name" value="RNRR2"/>
    <property type="match status" value="1"/>
</dbReference>
<dbReference type="FunFam" id="1.10.620.20:FF:000005">
    <property type="entry name" value="Ribonucleoside-diphosphate reductase subunit beta"/>
    <property type="match status" value="1"/>
</dbReference>
<dbReference type="Gene3D" id="1.10.620.20">
    <property type="entry name" value="Ribonucleotide Reductase, subunit A"/>
    <property type="match status" value="1"/>
</dbReference>
<dbReference type="InterPro" id="IPR009078">
    <property type="entry name" value="Ferritin-like_SF"/>
</dbReference>
<dbReference type="InterPro" id="IPR012348">
    <property type="entry name" value="RNR-like"/>
</dbReference>
<dbReference type="InterPro" id="IPR026494">
    <property type="entry name" value="RNR_NrdF-like"/>
</dbReference>
<dbReference type="InterPro" id="IPR033909">
    <property type="entry name" value="RNR_small"/>
</dbReference>
<dbReference type="InterPro" id="IPR030475">
    <property type="entry name" value="RNR_small_AS"/>
</dbReference>
<dbReference type="InterPro" id="IPR000358">
    <property type="entry name" value="RNR_small_fam"/>
</dbReference>
<dbReference type="NCBIfam" id="NF007182">
    <property type="entry name" value="PRK09614.1-1"/>
    <property type="match status" value="1"/>
</dbReference>
<dbReference type="NCBIfam" id="NF007183">
    <property type="entry name" value="PRK09614.1-2"/>
    <property type="match status" value="1"/>
</dbReference>
<dbReference type="NCBIfam" id="NF010572">
    <property type="entry name" value="PRK13965.1"/>
    <property type="match status" value="1"/>
</dbReference>
<dbReference type="NCBIfam" id="NF010573">
    <property type="entry name" value="PRK13966.1"/>
    <property type="match status" value="1"/>
</dbReference>
<dbReference type="NCBIfam" id="TIGR04171">
    <property type="entry name" value="RNR_1b_NrdF"/>
    <property type="match status" value="1"/>
</dbReference>
<dbReference type="PANTHER" id="PTHR23409">
    <property type="entry name" value="RIBONUCLEOSIDE-DIPHOSPHATE REDUCTASE SMALL CHAIN"/>
    <property type="match status" value="1"/>
</dbReference>
<dbReference type="PANTHER" id="PTHR23409:SF18">
    <property type="entry name" value="RIBONUCLEOSIDE-DIPHOSPHATE REDUCTASE SUBUNIT M2"/>
    <property type="match status" value="1"/>
</dbReference>
<dbReference type="Pfam" id="PF00268">
    <property type="entry name" value="Ribonuc_red_sm"/>
    <property type="match status" value="1"/>
</dbReference>
<dbReference type="PIRSF" id="PIRSF000355">
    <property type="entry name" value="NrdB"/>
    <property type="match status" value="1"/>
</dbReference>
<dbReference type="SUPFAM" id="SSF47240">
    <property type="entry name" value="Ferritin-like"/>
    <property type="match status" value="1"/>
</dbReference>
<dbReference type="PROSITE" id="PS00368">
    <property type="entry name" value="RIBORED_SMALL"/>
    <property type="match status" value="1"/>
</dbReference>
<sequence length="325" mass="37316">MLTGKMKLIDRVSAINWNWLQDDKDAEVWDRLTGNFWLPEKVPVSNDLPSWGTLTASEKQLTMRVFTGLTLLDTIQGTVGAVSLIPDALTPHEEAVYTNIAFMESVHAKSYSSIFSTLCSTAEIDEAFRWSEENNNLQRKAKIVMEYYRGDEPLKRKVASTLLESFLFYSGFYLPMYWSSRAKLTNTADMIRLIIRDEAVHGYYIGYKFQRGLVLVDDARRAELKEYTYELLFELYDNEVEYTQDLYDRVGLTEDVKKFLRYNANKALMNLGYEALFPRDETDVNPAILSALSPNADENHDFFSGSGSSYVIGKAVVTEDEDWDF</sequence>
<protein>
    <recommendedName>
        <fullName>Ribonucleoside-diphosphate reductase subunit beta</fullName>
        <ecNumber>1.17.4.1</ecNumber>
    </recommendedName>
    <alternativeName>
        <fullName>Ribonucleotide reductase small subunit</fullName>
    </alternativeName>
</protein>
<organism>
    <name type="scientific">Mycobacterium leprae (strain TN)</name>
    <dbReference type="NCBI Taxonomy" id="272631"/>
    <lineage>
        <taxon>Bacteria</taxon>
        <taxon>Bacillati</taxon>
        <taxon>Actinomycetota</taxon>
        <taxon>Actinomycetes</taxon>
        <taxon>Mycobacteriales</taxon>
        <taxon>Mycobacteriaceae</taxon>
        <taxon>Mycobacterium</taxon>
    </lineage>
</organism>
<reference key="1">
    <citation type="journal article" date="2001" name="Nature">
        <title>Massive gene decay in the leprosy bacillus.</title>
        <authorList>
            <person name="Cole S.T."/>
            <person name="Eiglmeier K."/>
            <person name="Parkhill J."/>
            <person name="James K.D."/>
            <person name="Thomson N.R."/>
            <person name="Wheeler P.R."/>
            <person name="Honore N."/>
            <person name="Garnier T."/>
            <person name="Churcher C.M."/>
            <person name="Harris D.E."/>
            <person name="Mungall K.L."/>
            <person name="Basham D."/>
            <person name="Brown D."/>
            <person name="Chillingworth T."/>
            <person name="Connor R."/>
            <person name="Davies R.M."/>
            <person name="Devlin K."/>
            <person name="Duthoy S."/>
            <person name="Feltwell T."/>
            <person name="Fraser A."/>
            <person name="Hamlin N."/>
            <person name="Holroyd S."/>
            <person name="Hornsby T."/>
            <person name="Jagels K."/>
            <person name="Lacroix C."/>
            <person name="Maclean J."/>
            <person name="Moule S."/>
            <person name="Murphy L.D."/>
            <person name="Oliver K."/>
            <person name="Quail M.A."/>
            <person name="Rajandream M.A."/>
            <person name="Rutherford K.M."/>
            <person name="Rutter S."/>
            <person name="Seeger K."/>
            <person name="Simon S."/>
            <person name="Simmonds M."/>
            <person name="Skelton J."/>
            <person name="Squares R."/>
            <person name="Squares S."/>
            <person name="Stevens K."/>
            <person name="Taylor K."/>
            <person name="Whitehead S."/>
            <person name="Woodward J.R."/>
            <person name="Barrell B.G."/>
        </authorList>
    </citation>
    <scope>NUCLEOTIDE SEQUENCE [LARGE SCALE GENOMIC DNA]</scope>
    <source>
        <strain>TN</strain>
    </source>
</reference>
<proteinExistence type="inferred from homology"/>
<name>RIR2_MYCLE</name>
<accession>Q9CBQ2</accession>
<gene>
    <name type="primary">nrdF</name>
    <name type="ordered locus">ML1731</name>
</gene>
<comment type="function">
    <text evidence="1">Provides the precursors necessary for DNA synthesis. Catalyzes the biosynthesis of deoxyribonucleotides from the corresponding ribonucleotides (By similarity).</text>
</comment>
<comment type="catalytic activity">
    <reaction evidence="2">
        <text>a 2'-deoxyribonucleoside 5'-diphosphate + [thioredoxin]-disulfide + H2O = a ribonucleoside 5'-diphosphate + [thioredoxin]-dithiol</text>
        <dbReference type="Rhea" id="RHEA:23252"/>
        <dbReference type="Rhea" id="RHEA-COMP:10698"/>
        <dbReference type="Rhea" id="RHEA-COMP:10700"/>
        <dbReference type="ChEBI" id="CHEBI:15377"/>
        <dbReference type="ChEBI" id="CHEBI:29950"/>
        <dbReference type="ChEBI" id="CHEBI:50058"/>
        <dbReference type="ChEBI" id="CHEBI:57930"/>
        <dbReference type="ChEBI" id="CHEBI:73316"/>
        <dbReference type="EC" id="1.17.4.1"/>
    </reaction>
</comment>
<comment type="cofactor">
    <cofactor evidence="1">
        <name>Fe cation</name>
        <dbReference type="ChEBI" id="CHEBI:24875"/>
    </cofactor>
    <text evidence="1">Binds 2 iron ions per subunit.</text>
</comment>
<comment type="subunit">
    <text evidence="1">Tetramer of two alpha and two beta subunits.</text>
</comment>
<comment type="similarity">
    <text evidence="3">Belongs to the ribonucleoside diphosphate reductase small chain family.</text>
</comment>
<evidence type="ECO:0000250" key="1"/>
<evidence type="ECO:0000255" key="2">
    <source>
        <dbReference type="PROSITE-ProRule" id="PRU10014"/>
    </source>
</evidence>
<evidence type="ECO:0000305" key="3"/>
<feature type="chain" id="PRO_0000190485" description="Ribonucleoside-diphosphate reductase subunit beta">
    <location>
        <begin position="1"/>
        <end position="325"/>
    </location>
</feature>
<feature type="active site" evidence="2">
    <location>
        <position position="111"/>
    </location>
</feature>
<feature type="binding site" evidence="2">
    <location>
        <position position="73"/>
    </location>
    <ligand>
        <name>Fe cation</name>
        <dbReference type="ChEBI" id="CHEBI:24875"/>
        <label>1</label>
    </ligand>
</feature>
<feature type="binding site" evidence="2">
    <location>
        <position position="104"/>
    </location>
    <ligand>
        <name>Fe cation</name>
        <dbReference type="ChEBI" id="CHEBI:24875"/>
        <label>1</label>
    </ligand>
</feature>
<feature type="binding site" evidence="1">
    <location>
        <position position="104"/>
    </location>
    <ligand>
        <name>Fe cation</name>
        <dbReference type="ChEBI" id="CHEBI:24875"/>
        <label>2</label>
    </ligand>
</feature>
<feature type="binding site" evidence="2">
    <location>
        <position position="107"/>
    </location>
    <ligand>
        <name>Fe cation</name>
        <dbReference type="ChEBI" id="CHEBI:24875"/>
        <label>1</label>
    </ligand>
</feature>
<feature type="binding site" evidence="1">
    <location>
        <position position="164"/>
    </location>
    <ligand>
        <name>Fe cation</name>
        <dbReference type="ChEBI" id="CHEBI:24875"/>
        <label>2</label>
    </ligand>
</feature>
<feature type="binding site" evidence="1">
    <location>
        <position position="198"/>
    </location>
    <ligand>
        <name>Fe cation</name>
        <dbReference type="ChEBI" id="CHEBI:24875"/>
        <label>2</label>
    </ligand>
</feature>
<feature type="binding site" evidence="1">
    <location>
        <position position="201"/>
    </location>
    <ligand>
        <name>Fe cation</name>
        <dbReference type="ChEBI" id="CHEBI:24875"/>
        <label>2</label>
    </ligand>
</feature>
<keyword id="KW-0215">Deoxyribonucleotide synthesis</keyword>
<keyword id="KW-0408">Iron</keyword>
<keyword id="KW-0479">Metal-binding</keyword>
<keyword id="KW-0560">Oxidoreductase</keyword>
<keyword id="KW-1185">Reference proteome</keyword>